<organism>
    <name type="scientific">Streptomyces virginiae</name>
    <name type="common">Streptomyces cinnamonensis</name>
    <dbReference type="NCBI Taxonomy" id="1961"/>
    <lineage>
        <taxon>Bacteria</taxon>
        <taxon>Bacillati</taxon>
        <taxon>Actinomycetota</taxon>
        <taxon>Actinomycetes</taxon>
        <taxon>Kitasatosporales</taxon>
        <taxon>Streptomycetaceae</taxon>
        <taxon>Streptomyces</taxon>
    </lineage>
</organism>
<comment type="function">
    <text evidence="3">Involved in the biosynthesis of virginiae butanolide (VB), which regulates the production of antibiotic virginiamycin. Catalyzes the reduction of 6-dehydro-VB-A to VB-A, the last catalytic step in VB biosynthesis. In vitro, can use various synthetic A-factor-type analogs.</text>
</comment>
<comment type="catalytic activity">
    <reaction evidence="3">
        <text>a (3R,4R)-3-[(1S)-1-hydroxyalkyl]-4-(hydroxymethyl)oxolan-2-one + NADP(+) = a (3R,4R)-3-alkanoyl-4-(hydroxymethyl)oxolan-2-one + NADPH + H(+)</text>
        <dbReference type="Rhea" id="RHEA:18941"/>
        <dbReference type="ChEBI" id="CHEBI:15378"/>
        <dbReference type="ChEBI" id="CHEBI:57783"/>
        <dbReference type="ChEBI" id="CHEBI:58349"/>
        <dbReference type="ChEBI" id="CHEBI:138440"/>
        <dbReference type="ChEBI" id="CHEBI:138441"/>
        <dbReference type="EC" id="1.1.1.413"/>
    </reaction>
    <physiologicalReaction direction="right-to-left" evidence="3">
        <dbReference type="Rhea" id="RHEA:18943"/>
    </physiologicalReaction>
</comment>
<comment type="biophysicochemical properties">
    <kinetics>
        <KM evidence="3">11.1 uM for 6-dehydro-VB-A</KM>
    </kinetics>
    <phDependence>
        <text evidence="3">Optimum pH is 7.5.</text>
    </phDependence>
    <temperatureDependence>
        <text evidence="3">Optimum temperature is 25 degrees Celsius.</text>
    </temperatureDependence>
</comment>
<comment type="subunit">
    <text evidence="3">Homodimer.</text>
</comment>
<comment type="induction">
    <text evidence="2">Constitutively expressed.</text>
</comment>
<comment type="disruption phenotype">
    <text evidence="3">Deletion mutant cannot produce VB or virginiamycin.</text>
</comment>
<comment type="similarity">
    <text evidence="6">Belongs to the short-chain dehydrogenases/reductases (SDR) family.</text>
</comment>
<proteinExistence type="evidence at protein level"/>
<gene>
    <name evidence="5" type="primary">barS1</name>
    <name evidence="4" type="synonym">orf4</name>
</gene>
<sequence>MTDRQGLLTDRIALITGASSGIGAAQRGLFAREGAAVVVTARREERLAGLVDELRAQGARAAYVVADVTRSEDAVRAVEFTVERFGRLDAAFNKRRHGAGRTPLHLMDDPVYDDIMDTNVRGVFNCLRPEIAAMLASGAGGSIVNTSSTGGLVATPVAAPYVVSKHAVLGLTKGPAAEYGAHGIRVNAIAPGTTRSEMVADWFAQNPDAEELLHRATPQPRTAEPQEIAEAAAWLCSERASFVTGSTLVVDGGFTIL</sequence>
<dbReference type="EC" id="1.1.1.413" evidence="3"/>
<dbReference type="EMBL" id="AB035548">
    <property type="protein sequence ID" value="BAA96298.1"/>
    <property type="molecule type" value="Genomic_DNA"/>
</dbReference>
<dbReference type="SMR" id="Q9LBV3"/>
<dbReference type="KEGG" id="ag:BAA96298"/>
<dbReference type="BioCyc" id="MetaCyc:MONOMER-20201"/>
<dbReference type="GO" id="GO:0016491">
    <property type="term" value="F:oxidoreductase activity"/>
    <property type="evidence" value="ECO:0007669"/>
    <property type="project" value="UniProtKB-KW"/>
</dbReference>
<dbReference type="CDD" id="cd05233">
    <property type="entry name" value="SDR_c"/>
    <property type="match status" value="1"/>
</dbReference>
<dbReference type="FunFam" id="3.40.50.720:FF:000084">
    <property type="entry name" value="Short-chain dehydrogenase reductase"/>
    <property type="match status" value="1"/>
</dbReference>
<dbReference type="Gene3D" id="3.40.50.720">
    <property type="entry name" value="NAD(P)-binding Rossmann-like Domain"/>
    <property type="match status" value="1"/>
</dbReference>
<dbReference type="InterPro" id="IPR036291">
    <property type="entry name" value="NAD(P)-bd_dom_sf"/>
</dbReference>
<dbReference type="InterPro" id="IPR020904">
    <property type="entry name" value="Sc_DH/Rdtase_CS"/>
</dbReference>
<dbReference type="InterPro" id="IPR002347">
    <property type="entry name" value="SDR_fam"/>
</dbReference>
<dbReference type="PANTHER" id="PTHR24321">
    <property type="entry name" value="DEHYDROGENASES, SHORT CHAIN"/>
    <property type="match status" value="1"/>
</dbReference>
<dbReference type="PANTHER" id="PTHR24321:SF8">
    <property type="entry name" value="ESTRADIOL 17-BETA-DEHYDROGENASE 8-RELATED"/>
    <property type="match status" value="1"/>
</dbReference>
<dbReference type="Pfam" id="PF13561">
    <property type="entry name" value="adh_short_C2"/>
    <property type="match status" value="1"/>
</dbReference>
<dbReference type="PRINTS" id="PR00081">
    <property type="entry name" value="GDHRDH"/>
</dbReference>
<dbReference type="SUPFAM" id="SSF51735">
    <property type="entry name" value="NAD(P)-binding Rossmann-fold domains"/>
    <property type="match status" value="1"/>
</dbReference>
<dbReference type="PROSITE" id="PS00061">
    <property type="entry name" value="ADH_SHORT"/>
    <property type="match status" value="1"/>
</dbReference>
<evidence type="ECO:0000255" key="1">
    <source>
        <dbReference type="PROSITE-ProRule" id="PRU10001"/>
    </source>
</evidence>
<evidence type="ECO:0000269" key="2">
    <source>
    </source>
</evidence>
<evidence type="ECO:0000269" key="3">
    <source>
    </source>
</evidence>
<evidence type="ECO:0000303" key="4">
    <source>
    </source>
</evidence>
<evidence type="ECO:0000303" key="5">
    <source>
    </source>
</evidence>
<evidence type="ECO:0000305" key="6"/>
<accession>Q9LBV3</accession>
<keyword id="KW-0521">NADP</keyword>
<keyword id="KW-0560">Oxidoreductase</keyword>
<reference key="1">
    <citation type="journal article" date="2000" name="Mol. Microbiol.">
        <title>Identification of an AfsA homologue (BarX) from Streptomyces virginiae as a pleiotropic regulator controlling autoregulator biosynthesis, virginiamycin biosynthesis and virginiamycin M1 resistance.</title>
        <authorList>
            <person name="Kawachi R."/>
            <person name="Akashi T."/>
            <person name="Kamitani Y."/>
            <person name="Sy A."/>
            <person name="Wangchaisoonthorn U."/>
            <person name="Nihira T."/>
            <person name="Yamada Y."/>
        </authorList>
    </citation>
    <scope>NUCLEOTIDE SEQUENCE [GENOMIC DNA]</scope>
    <scope>INDUCTION</scope>
    <source>
        <strain>MAFF10-06014</strain>
    </source>
</reference>
<reference key="2">
    <citation type="journal article" date="2002" name="J. Bacteriol.">
        <title>barS1, a gene for biosynthesis of a gamma-butyrolactone autoregulator, a microbial signaling molecule eliciting antibiotic production in Streptomyces species.</title>
        <authorList>
            <person name="Shikura N."/>
            <person name="Yamamura J."/>
            <person name="Nihira T."/>
        </authorList>
    </citation>
    <scope>FUNCTION</scope>
    <scope>CATALYTIC ACTIVITY</scope>
    <scope>BIOPHYSICOCHEMICAL PROPERTIES</scope>
    <scope>SUBUNIT</scope>
    <scope>DISRUPTION PHENOTYPE</scope>
    <source>
        <strain>MAFF10-06014</strain>
    </source>
</reference>
<name>BARS1_STRVG</name>
<protein>
    <recommendedName>
        <fullName evidence="6">A-factor type gamma-butyrolactone 1'-reductase (1S-forming)</fullName>
        <ecNumber evidence="3">1.1.1.413</ecNumber>
    </recommendedName>
    <alternativeName>
        <fullName evidence="5">6-dehydro-VB-A reductase</fullName>
    </alternativeName>
    <alternativeName>
        <fullName evidence="5">Butyrolactone autoregulator synthesis</fullName>
    </alternativeName>
</protein>
<feature type="chain" id="PRO_0000447188" description="A-factor type gamma-butyrolactone 1'-reductase (1S-forming)">
    <location>
        <begin position="1"/>
        <end position="257"/>
    </location>
</feature>
<feature type="active site" description="Proton acceptor" evidence="1">
    <location>
        <position position="161"/>
    </location>
</feature>